<comment type="function">
    <text evidence="1">Acts as a regulator of the electron transfer flavoprotein by promoting the removal of flavin from the ETF holoenzyme (composed of ETFA and ETFB).</text>
</comment>
<comment type="subunit">
    <text evidence="1">homotetramer. Interacts with NDUFAB1. Interacts with ETFA. Interacts with ETFB.</text>
</comment>
<comment type="subcellular location">
    <subcellularLocation>
        <location evidence="1">Mitochondrion</location>
    </subcellularLocation>
</comment>
<comment type="similarity">
    <text evidence="6">Belongs to the complex I LYR family.</text>
</comment>
<evidence type="ECO:0000250" key="1">
    <source>
        <dbReference type="UniProtKB" id="Q6IPR1"/>
    </source>
</evidence>
<evidence type="ECO:0000269" key="2">
    <source>
    </source>
</evidence>
<evidence type="ECO:0000269" key="3">
    <source>
    </source>
</evidence>
<evidence type="ECO:0000269" key="4">
    <source ref="2"/>
</evidence>
<evidence type="ECO:0000303" key="5">
    <source ref="1"/>
</evidence>
<evidence type="ECO:0000305" key="6"/>
<evidence type="ECO:0000312" key="7">
    <source>
        <dbReference type="MGI" id="MGI:1914886"/>
    </source>
</evidence>
<name>ETFR1_MOUSE</name>
<organism>
    <name type="scientific">Mus musculus</name>
    <name type="common">Mouse</name>
    <dbReference type="NCBI Taxonomy" id="10090"/>
    <lineage>
        <taxon>Eukaryota</taxon>
        <taxon>Metazoa</taxon>
        <taxon>Chordata</taxon>
        <taxon>Craniata</taxon>
        <taxon>Vertebrata</taxon>
        <taxon>Euteleostomi</taxon>
        <taxon>Mammalia</taxon>
        <taxon>Eutheria</taxon>
        <taxon>Euarchontoglires</taxon>
        <taxon>Glires</taxon>
        <taxon>Rodentia</taxon>
        <taxon>Myomorpha</taxon>
        <taxon>Muroidea</taxon>
        <taxon>Muridae</taxon>
        <taxon>Murinae</taxon>
        <taxon>Mus</taxon>
        <taxon>Mus</taxon>
    </lineage>
</organism>
<reference key="1">
    <citation type="submission" date="2001-08" db="EMBL/GenBank/DDBJ databases">
        <title>Polymerase chain reaction-based subtractive hybridization: identification of a novel interscapular brown adipose tissue gene from growth hormone antagonist mice.</title>
        <authorList>
            <person name="Li Y."/>
            <person name="Coschigano K.T."/>
            <person name="Kopchick J.K."/>
        </authorList>
    </citation>
    <scope>NUCLEOTIDE SEQUENCE [MRNA]</scope>
    <source>
        <strain>C57BL/6J</strain>
    </source>
</reference>
<reference key="2">
    <citation type="submission" date="2004-09" db="EMBL/GenBank/DDBJ databases">
        <title>Complex in vitro allelic effects of mouse Pas1 candidate genes in human lung cancer cell lines.</title>
        <authorList>
            <person name="Manenti G."/>
            <person name="Galbiati F."/>
            <person name="Pettinicchio A."/>
            <person name="Dragani T.A."/>
        </authorList>
    </citation>
    <scope>NUCLEOTIDE SEQUENCE [MRNA]</scope>
    <scope>VARIANT GLY-28</scope>
    <source>
        <strain>A/J</strain>
        <tissue>Lung</tissue>
    </source>
</reference>
<reference key="3">
    <citation type="journal article" date="2005" name="Science">
        <title>The transcriptional landscape of the mammalian genome.</title>
        <authorList>
            <person name="Carninci P."/>
            <person name="Kasukawa T."/>
            <person name="Katayama S."/>
            <person name="Gough J."/>
            <person name="Frith M.C."/>
            <person name="Maeda N."/>
            <person name="Oyama R."/>
            <person name="Ravasi T."/>
            <person name="Lenhard B."/>
            <person name="Wells C."/>
            <person name="Kodzius R."/>
            <person name="Shimokawa K."/>
            <person name="Bajic V.B."/>
            <person name="Brenner S.E."/>
            <person name="Batalov S."/>
            <person name="Forrest A.R."/>
            <person name="Zavolan M."/>
            <person name="Davis M.J."/>
            <person name="Wilming L.G."/>
            <person name="Aidinis V."/>
            <person name="Allen J.E."/>
            <person name="Ambesi-Impiombato A."/>
            <person name="Apweiler R."/>
            <person name="Aturaliya R.N."/>
            <person name="Bailey T.L."/>
            <person name="Bansal M."/>
            <person name="Baxter L."/>
            <person name="Beisel K.W."/>
            <person name="Bersano T."/>
            <person name="Bono H."/>
            <person name="Chalk A.M."/>
            <person name="Chiu K.P."/>
            <person name="Choudhary V."/>
            <person name="Christoffels A."/>
            <person name="Clutterbuck D.R."/>
            <person name="Crowe M.L."/>
            <person name="Dalla E."/>
            <person name="Dalrymple B.P."/>
            <person name="de Bono B."/>
            <person name="Della Gatta G."/>
            <person name="di Bernardo D."/>
            <person name="Down T."/>
            <person name="Engstrom P."/>
            <person name="Fagiolini M."/>
            <person name="Faulkner G."/>
            <person name="Fletcher C.F."/>
            <person name="Fukushima T."/>
            <person name="Furuno M."/>
            <person name="Futaki S."/>
            <person name="Gariboldi M."/>
            <person name="Georgii-Hemming P."/>
            <person name="Gingeras T.R."/>
            <person name="Gojobori T."/>
            <person name="Green R.E."/>
            <person name="Gustincich S."/>
            <person name="Harbers M."/>
            <person name="Hayashi Y."/>
            <person name="Hensch T.K."/>
            <person name="Hirokawa N."/>
            <person name="Hill D."/>
            <person name="Huminiecki L."/>
            <person name="Iacono M."/>
            <person name="Ikeo K."/>
            <person name="Iwama A."/>
            <person name="Ishikawa T."/>
            <person name="Jakt M."/>
            <person name="Kanapin A."/>
            <person name="Katoh M."/>
            <person name="Kawasawa Y."/>
            <person name="Kelso J."/>
            <person name="Kitamura H."/>
            <person name="Kitano H."/>
            <person name="Kollias G."/>
            <person name="Krishnan S.P."/>
            <person name="Kruger A."/>
            <person name="Kummerfeld S.K."/>
            <person name="Kurochkin I.V."/>
            <person name="Lareau L.F."/>
            <person name="Lazarevic D."/>
            <person name="Lipovich L."/>
            <person name="Liu J."/>
            <person name="Liuni S."/>
            <person name="McWilliam S."/>
            <person name="Madan Babu M."/>
            <person name="Madera M."/>
            <person name="Marchionni L."/>
            <person name="Matsuda H."/>
            <person name="Matsuzawa S."/>
            <person name="Miki H."/>
            <person name="Mignone F."/>
            <person name="Miyake S."/>
            <person name="Morris K."/>
            <person name="Mottagui-Tabar S."/>
            <person name="Mulder N."/>
            <person name="Nakano N."/>
            <person name="Nakauchi H."/>
            <person name="Ng P."/>
            <person name="Nilsson R."/>
            <person name="Nishiguchi S."/>
            <person name="Nishikawa S."/>
            <person name="Nori F."/>
            <person name="Ohara O."/>
            <person name="Okazaki Y."/>
            <person name="Orlando V."/>
            <person name="Pang K.C."/>
            <person name="Pavan W.J."/>
            <person name="Pavesi G."/>
            <person name="Pesole G."/>
            <person name="Petrovsky N."/>
            <person name="Piazza S."/>
            <person name="Reed J."/>
            <person name="Reid J.F."/>
            <person name="Ring B.Z."/>
            <person name="Ringwald M."/>
            <person name="Rost B."/>
            <person name="Ruan Y."/>
            <person name="Salzberg S.L."/>
            <person name="Sandelin A."/>
            <person name="Schneider C."/>
            <person name="Schoenbach C."/>
            <person name="Sekiguchi K."/>
            <person name="Semple C.A."/>
            <person name="Seno S."/>
            <person name="Sessa L."/>
            <person name="Sheng Y."/>
            <person name="Shibata Y."/>
            <person name="Shimada H."/>
            <person name="Shimada K."/>
            <person name="Silva D."/>
            <person name="Sinclair B."/>
            <person name="Sperling S."/>
            <person name="Stupka E."/>
            <person name="Sugiura K."/>
            <person name="Sultana R."/>
            <person name="Takenaka Y."/>
            <person name="Taki K."/>
            <person name="Tammoja K."/>
            <person name="Tan S.L."/>
            <person name="Tang S."/>
            <person name="Taylor M.S."/>
            <person name="Tegner J."/>
            <person name="Teichmann S.A."/>
            <person name="Ueda H.R."/>
            <person name="van Nimwegen E."/>
            <person name="Verardo R."/>
            <person name="Wei C.L."/>
            <person name="Yagi K."/>
            <person name="Yamanishi H."/>
            <person name="Zabarovsky E."/>
            <person name="Zhu S."/>
            <person name="Zimmer A."/>
            <person name="Hide W."/>
            <person name="Bult C."/>
            <person name="Grimmond S.M."/>
            <person name="Teasdale R.D."/>
            <person name="Liu E.T."/>
            <person name="Brusic V."/>
            <person name="Quackenbush J."/>
            <person name="Wahlestedt C."/>
            <person name="Mattick J.S."/>
            <person name="Hume D.A."/>
            <person name="Kai C."/>
            <person name="Sasaki D."/>
            <person name="Tomaru Y."/>
            <person name="Fukuda S."/>
            <person name="Kanamori-Katayama M."/>
            <person name="Suzuki M."/>
            <person name="Aoki J."/>
            <person name="Arakawa T."/>
            <person name="Iida J."/>
            <person name="Imamura K."/>
            <person name="Itoh M."/>
            <person name="Kato T."/>
            <person name="Kawaji H."/>
            <person name="Kawagashira N."/>
            <person name="Kawashima T."/>
            <person name="Kojima M."/>
            <person name="Kondo S."/>
            <person name="Konno H."/>
            <person name="Nakano K."/>
            <person name="Ninomiya N."/>
            <person name="Nishio T."/>
            <person name="Okada M."/>
            <person name="Plessy C."/>
            <person name="Shibata K."/>
            <person name="Shiraki T."/>
            <person name="Suzuki S."/>
            <person name="Tagami M."/>
            <person name="Waki K."/>
            <person name="Watahiki A."/>
            <person name="Okamura-Oho Y."/>
            <person name="Suzuki H."/>
            <person name="Kawai J."/>
            <person name="Hayashizaki Y."/>
        </authorList>
    </citation>
    <scope>NUCLEOTIDE SEQUENCE [LARGE SCALE MRNA]</scope>
    <source>
        <strain>C57BL/6J</strain>
        <tissue>Testis</tissue>
    </source>
</reference>
<reference key="4">
    <citation type="journal article" date="2009" name="PLoS Biol.">
        <title>Lineage-specific biology revealed by a finished genome assembly of the mouse.</title>
        <authorList>
            <person name="Church D.M."/>
            <person name="Goodstadt L."/>
            <person name="Hillier L.W."/>
            <person name="Zody M.C."/>
            <person name="Goldstein S."/>
            <person name="She X."/>
            <person name="Bult C.J."/>
            <person name="Agarwala R."/>
            <person name="Cherry J.L."/>
            <person name="DiCuccio M."/>
            <person name="Hlavina W."/>
            <person name="Kapustin Y."/>
            <person name="Meric P."/>
            <person name="Maglott D."/>
            <person name="Birtle Z."/>
            <person name="Marques A.C."/>
            <person name="Graves T."/>
            <person name="Zhou S."/>
            <person name="Teague B."/>
            <person name="Potamousis K."/>
            <person name="Churas C."/>
            <person name="Place M."/>
            <person name="Herschleb J."/>
            <person name="Runnheim R."/>
            <person name="Forrest D."/>
            <person name="Amos-Landgraf J."/>
            <person name="Schwartz D.C."/>
            <person name="Cheng Z."/>
            <person name="Lindblad-Toh K."/>
            <person name="Eichler E.E."/>
            <person name="Ponting C.P."/>
        </authorList>
    </citation>
    <scope>NUCLEOTIDE SEQUENCE [LARGE SCALE GENOMIC DNA]</scope>
    <source>
        <strain>C57BL/6J</strain>
    </source>
</reference>
<reference key="5">
    <citation type="journal article" date="2004" name="Genome Res.">
        <title>The status, quality, and expansion of the NIH full-length cDNA project: the Mammalian Gene Collection (MGC).</title>
        <authorList>
            <consortium name="The MGC Project Team"/>
        </authorList>
    </citation>
    <scope>NUCLEOTIDE SEQUENCE [LARGE SCALE MRNA]</scope>
    <scope>VARIANT GLY-28</scope>
    <source>
        <strain>FVB/N</strain>
        <tissue>Mammary tumor</tissue>
    </source>
</reference>
<reference key="6">
    <citation type="journal article" date="2004" name="Oncogene">
        <title>Haplotype sharing suggests that a genomic segment containing six genes accounts for the pulmonary adenoma susceptibility 1 (Pas1) locus activity in mice.</title>
        <authorList>
            <person name="Manenti G."/>
            <person name="Galbiati F."/>
            <person name="Gianni-Barrera R."/>
            <person name="Pettinicchio A."/>
            <person name="Acevedo A."/>
            <person name="Dragani T.A."/>
        </authorList>
    </citation>
    <scope>NUCLEOTIDE SEQUENCE [GENOMIC DNA] OF 1-85</scope>
    <scope>VARIANT GLY-28</scope>
    <source>
        <strain>A/J</strain>
    </source>
</reference>
<reference key="7">
    <citation type="journal article" date="2010" name="Cell">
        <title>A tissue-specific atlas of mouse protein phosphorylation and expression.</title>
        <authorList>
            <person name="Huttlin E.L."/>
            <person name="Jedrychowski M.P."/>
            <person name="Elias J.E."/>
            <person name="Goswami T."/>
            <person name="Rad R."/>
            <person name="Beausoleil S.A."/>
            <person name="Villen J."/>
            <person name="Haas W."/>
            <person name="Sowa M.E."/>
            <person name="Gygi S.P."/>
        </authorList>
    </citation>
    <scope>IDENTIFICATION BY MASS SPECTROMETRY [LARGE SCALE ANALYSIS]</scope>
    <source>
        <tissue>Brown adipose tissue</tissue>
        <tissue>Testis</tissue>
    </source>
</reference>
<protein>
    <recommendedName>
        <fullName evidence="1">Electron transfer flavoprotein regulatory factor 1</fullName>
    </recommendedName>
    <alternativeName>
        <fullName evidence="5">Growth hormone-inducible soluble protein</fullName>
    </alternativeName>
    <alternativeName>
        <fullName evidence="1">LYR motif-containing protein 5</fullName>
    </alternativeName>
</protein>
<gene>
    <name evidence="1" type="primary">Etfrf1</name>
    <name evidence="7" type="synonym">Lyrm5</name>
</gene>
<sequence>MANSLRGEVLTLYKNLLYLGRDYPKGADYFKRRLKNVFLKNKDVEDPEKIKELIARGEFVMKELEALYFLRKYRAMKQRYYSDTKV</sequence>
<accession>Q91V16</accession>
<accession>B2KFC1</accession>
<accession>Q675B1</accession>
<accession>Q8VDL7</accession>
<proteinExistence type="evidence at protein level"/>
<dbReference type="EMBL" id="AF412298">
    <property type="protein sequence ID" value="AAL07804.1"/>
    <property type="molecule type" value="mRNA"/>
</dbReference>
<dbReference type="EMBL" id="AF412299">
    <property type="protein sequence ID" value="AAL07805.1"/>
    <property type="molecule type" value="mRNA"/>
</dbReference>
<dbReference type="EMBL" id="AF412300">
    <property type="protein sequence ID" value="AAL07806.1"/>
    <property type="molecule type" value="mRNA"/>
</dbReference>
<dbReference type="EMBL" id="AY753325">
    <property type="protein sequence ID" value="AAV31717.1"/>
    <property type="molecule type" value="mRNA"/>
</dbReference>
<dbReference type="EMBL" id="AK015530">
    <property type="protein sequence ID" value="BAC25464.1"/>
    <property type="molecule type" value="mRNA"/>
</dbReference>
<dbReference type="EMBL" id="CU207316">
    <property type="status" value="NOT_ANNOTATED_CDS"/>
    <property type="molecule type" value="Genomic_DNA"/>
</dbReference>
<dbReference type="EMBL" id="BC021522">
    <property type="protein sequence ID" value="AAH21522.1"/>
    <property type="molecule type" value="mRNA"/>
</dbReference>
<dbReference type="EMBL" id="AY490388">
    <property type="protein sequence ID" value="AAT72334.1"/>
    <property type="molecule type" value="Genomic_DNA"/>
</dbReference>
<dbReference type="CCDS" id="CCDS39706.1"/>
<dbReference type="RefSeq" id="NP_001157100.1">
    <property type="nucleotide sequence ID" value="NM_001163628.1"/>
</dbReference>
<dbReference type="RefSeq" id="NP_001348982.1">
    <property type="nucleotide sequence ID" value="NM_001362053.1"/>
</dbReference>
<dbReference type="RefSeq" id="NP_001348983.1">
    <property type="nucleotide sequence ID" value="NM_001362054.1"/>
</dbReference>
<dbReference type="RefSeq" id="NP_001348984.1">
    <property type="nucleotide sequence ID" value="NM_001362055.1"/>
</dbReference>
<dbReference type="RefSeq" id="NP_001348985.1">
    <property type="nucleotide sequence ID" value="NM_001362056.1"/>
</dbReference>
<dbReference type="RefSeq" id="NP_001348986.1">
    <property type="nucleotide sequence ID" value="NM_001362057.1"/>
</dbReference>
<dbReference type="RefSeq" id="NP_001348987.1">
    <property type="nucleotide sequence ID" value="NM_001362058.1"/>
</dbReference>
<dbReference type="RefSeq" id="NP_001348988.1">
    <property type="nucleotide sequence ID" value="NM_001362059.1"/>
</dbReference>
<dbReference type="RefSeq" id="NP_598449.1">
    <property type="nucleotide sequence ID" value="NM_133688.3"/>
</dbReference>
<dbReference type="RefSeq" id="XP_006507045.1">
    <property type="nucleotide sequence ID" value="XM_006506982.2"/>
</dbReference>
<dbReference type="RefSeq" id="XP_006507046.1">
    <property type="nucleotide sequence ID" value="XM_006506983.5"/>
</dbReference>
<dbReference type="RefSeq" id="XP_006507047.1">
    <property type="nucleotide sequence ID" value="XM_006506984.2"/>
</dbReference>
<dbReference type="RefSeq" id="XP_017177210.1">
    <property type="nucleotide sequence ID" value="XM_017321721.1"/>
</dbReference>
<dbReference type="RefSeq" id="XP_036008171.1">
    <property type="nucleotide sequence ID" value="XM_036152278.1"/>
</dbReference>
<dbReference type="RefSeq" id="XP_036008172.1">
    <property type="nucleotide sequence ID" value="XM_036152279.1"/>
</dbReference>
<dbReference type="SMR" id="Q91V16"/>
<dbReference type="BioGRID" id="212324">
    <property type="interactions" value="5"/>
</dbReference>
<dbReference type="FunCoup" id="Q91V16">
    <property type="interactions" value="1163"/>
</dbReference>
<dbReference type="STRING" id="10090.ENSMUSP00000039433"/>
<dbReference type="GlyGen" id="Q91V16">
    <property type="glycosylation" value="1 site, 1 O-linked glycan (1 site)"/>
</dbReference>
<dbReference type="PhosphoSitePlus" id="Q91V16"/>
<dbReference type="jPOST" id="Q91V16"/>
<dbReference type="PaxDb" id="10090-ENSMUSP00000107354"/>
<dbReference type="PeptideAtlas" id="Q91V16"/>
<dbReference type="ProteomicsDB" id="275485"/>
<dbReference type="Pumba" id="Q91V16"/>
<dbReference type="Antibodypedia" id="48706">
    <property type="antibodies" value="35 antibodies from 11 providers"/>
</dbReference>
<dbReference type="Ensembl" id="ENSMUST00000039729.5">
    <property type="protein sequence ID" value="ENSMUSP00000039433.4"/>
    <property type="gene ID" value="ENSMUSG00000040370.14"/>
</dbReference>
<dbReference type="Ensembl" id="ENSMUST00000111719.2">
    <property type="protein sequence ID" value="ENSMUSP00000107348.2"/>
    <property type="gene ID" value="ENSMUSG00000040370.14"/>
</dbReference>
<dbReference type="Ensembl" id="ENSMUST00000111721.2">
    <property type="protein sequence ID" value="ENSMUSP00000107350.2"/>
    <property type="gene ID" value="ENSMUSG00000040370.14"/>
</dbReference>
<dbReference type="Ensembl" id="ENSMUST00000111723.8">
    <property type="protein sequence ID" value="ENSMUSP00000107352.2"/>
    <property type="gene ID" value="ENSMUSG00000040370.14"/>
</dbReference>
<dbReference type="Ensembl" id="ENSMUST00000111724.8">
    <property type="protein sequence ID" value="ENSMUSP00000107353.2"/>
    <property type="gene ID" value="ENSMUSG00000040370.14"/>
</dbReference>
<dbReference type="Ensembl" id="ENSMUST00000111725.8">
    <property type="protein sequence ID" value="ENSMUSP00000107354.2"/>
    <property type="gene ID" value="ENSMUSG00000040370.14"/>
</dbReference>
<dbReference type="Ensembl" id="ENSMUST00000111726.10">
    <property type="protein sequence ID" value="ENSMUSP00000107355.4"/>
    <property type="gene ID" value="ENSMUSG00000040370.14"/>
</dbReference>
<dbReference type="GeneID" id="67636"/>
<dbReference type="KEGG" id="mmu:67636"/>
<dbReference type="UCSC" id="uc009erf.2">
    <property type="organism name" value="mouse"/>
</dbReference>
<dbReference type="AGR" id="MGI:1914886"/>
<dbReference type="CTD" id="144363"/>
<dbReference type="MGI" id="MGI:1914886">
    <property type="gene designation" value="Etfrf1"/>
</dbReference>
<dbReference type="VEuPathDB" id="HostDB:ENSMUSG00000040370"/>
<dbReference type="eggNOG" id="ENOG502S4S4">
    <property type="taxonomic scope" value="Eukaryota"/>
</dbReference>
<dbReference type="GeneTree" id="ENSGT00390000001810"/>
<dbReference type="HOGENOM" id="CLU_141157_2_0_1"/>
<dbReference type="InParanoid" id="Q91V16"/>
<dbReference type="OMA" id="HRAFMSK"/>
<dbReference type="OrthoDB" id="10258445at2759"/>
<dbReference type="PhylomeDB" id="Q91V16"/>
<dbReference type="TreeFam" id="TF300251"/>
<dbReference type="BioGRID-ORCS" id="67636">
    <property type="hits" value="1 hit in 76 CRISPR screens"/>
</dbReference>
<dbReference type="ChiTaRS" id="Lyrm5">
    <property type="organism name" value="mouse"/>
</dbReference>
<dbReference type="PRO" id="PR:Q91V16"/>
<dbReference type="Proteomes" id="UP000000589">
    <property type="component" value="Chromosome 6"/>
</dbReference>
<dbReference type="RNAct" id="Q91V16">
    <property type="molecule type" value="protein"/>
</dbReference>
<dbReference type="Bgee" id="ENSMUSG00000040370">
    <property type="expression patterns" value="Expressed in interventricular septum and 244 other cell types or tissues"/>
</dbReference>
<dbReference type="GO" id="GO:0005739">
    <property type="term" value="C:mitochondrion"/>
    <property type="evidence" value="ECO:0007005"/>
    <property type="project" value="MGI"/>
</dbReference>
<dbReference type="GO" id="GO:0004857">
    <property type="term" value="F:enzyme inhibitor activity"/>
    <property type="evidence" value="ECO:0007669"/>
    <property type="project" value="Ensembl"/>
</dbReference>
<dbReference type="GO" id="GO:0090324">
    <property type="term" value="P:negative regulation of oxidative phosphorylation"/>
    <property type="evidence" value="ECO:0007669"/>
    <property type="project" value="InterPro"/>
</dbReference>
<dbReference type="GO" id="GO:0022904">
    <property type="term" value="P:respiratory electron transport chain"/>
    <property type="evidence" value="ECO:0000250"/>
    <property type="project" value="UniProtKB"/>
</dbReference>
<dbReference type="CDD" id="cd20265">
    <property type="entry name" value="Complex1_LYR_ETFRF1_LYRM5"/>
    <property type="match status" value="1"/>
</dbReference>
<dbReference type="InterPro" id="IPR008011">
    <property type="entry name" value="Complex1_LYR_dom"/>
</dbReference>
<dbReference type="InterPro" id="IPR045296">
    <property type="entry name" value="Complex1_LYR_ETFRF1_LYRM5"/>
</dbReference>
<dbReference type="InterPro" id="IPR052000">
    <property type="entry name" value="ETFRF1"/>
</dbReference>
<dbReference type="PANTHER" id="PTHR21024:SF0">
    <property type="entry name" value="ELECTRON TRANSFER FLAVOPROTEIN REGULATORY FACTOR 1"/>
    <property type="match status" value="1"/>
</dbReference>
<dbReference type="PANTHER" id="PTHR21024">
    <property type="entry name" value="GROWTH HORMONE-INDUCIBLE SOLUBLE PROTEIN-RELATED"/>
    <property type="match status" value="1"/>
</dbReference>
<dbReference type="Pfam" id="PF05347">
    <property type="entry name" value="Complex1_LYR"/>
    <property type="match status" value="1"/>
</dbReference>
<feature type="chain" id="PRO_0000251183" description="Electron transfer flavoprotein regulatory factor 1">
    <location>
        <begin position="1"/>
        <end position="86"/>
    </location>
</feature>
<feature type="sequence variant" evidence="2 3 4">
    <original>D</original>
    <variation>G</variation>
    <location>
        <position position="28"/>
    </location>
</feature>
<keyword id="KW-0496">Mitochondrion</keyword>
<keyword id="KW-1185">Reference proteome</keyword>